<accession>Q0TID8</accession>
<sequence>MSQLCPCGSAVEYSLCCHPYVSGEKVAPDPEHLMRSRYCAFVMQDADYLIKTWHPSCGATALRAELIAGFAHTEWLGLTVFEHCWQDGGNIGFVSFVARFTEGGKTGAIIERSRFLKENGQWYYIDGTRPQFGRNDPCPCGSGKKFKKCCGQ</sequence>
<dbReference type="EMBL" id="CP000247">
    <property type="protein sequence ID" value="ABG69291.1"/>
    <property type="molecule type" value="Genomic_DNA"/>
</dbReference>
<dbReference type="RefSeq" id="WP_001541266.1">
    <property type="nucleotide sequence ID" value="NC_008253.1"/>
</dbReference>
<dbReference type="SMR" id="Q0TID8"/>
<dbReference type="KEGG" id="ecp:ECP_1280"/>
<dbReference type="HOGENOM" id="CLU_099590_0_0_6"/>
<dbReference type="Proteomes" id="UP000009182">
    <property type="component" value="Chromosome"/>
</dbReference>
<dbReference type="Gene3D" id="3.10.450.50">
    <property type="match status" value="1"/>
</dbReference>
<dbReference type="HAMAP" id="MF_00612">
    <property type="entry name" value="UPF0225"/>
    <property type="match status" value="1"/>
</dbReference>
<dbReference type="InterPro" id="IPR032710">
    <property type="entry name" value="NTF2-like_dom_sf"/>
</dbReference>
<dbReference type="InterPro" id="IPR004027">
    <property type="entry name" value="SEC_C_motif"/>
</dbReference>
<dbReference type="InterPro" id="IPR023006">
    <property type="entry name" value="UPF0225"/>
</dbReference>
<dbReference type="InterPro" id="IPR048469">
    <property type="entry name" value="YchJ-like_M"/>
</dbReference>
<dbReference type="NCBIfam" id="NF002449">
    <property type="entry name" value="PRK01617.1"/>
    <property type="match status" value="1"/>
</dbReference>
<dbReference type="NCBIfam" id="NF002486">
    <property type="entry name" value="PRK01752.1"/>
    <property type="match status" value="1"/>
</dbReference>
<dbReference type="PANTHER" id="PTHR33747:SF1">
    <property type="entry name" value="ADENYLATE CYCLASE-ASSOCIATED CAP C-TERMINAL DOMAIN-CONTAINING PROTEIN"/>
    <property type="match status" value="1"/>
</dbReference>
<dbReference type="PANTHER" id="PTHR33747">
    <property type="entry name" value="UPF0225 PROTEIN SCO1677"/>
    <property type="match status" value="1"/>
</dbReference>
<dbReference type="Pfam" id="PF02810">
    <property type="entry name" value="SEC-C"/>
    <property type="match status" value="2"/>
</dbReference>
<dbReference type="Pfam" id="PF17775">
    <property type="entry name" value="YchJ_M-like"/>
    <property type="match status" value="1"/>
</dbReference>
<dbReference type="SUPFAM" id="SSF54427">
    <property type="entry name" value="NTF2-like"/>
    <property type="match status" value="1"/>
</dbReference>
<dbReference type="SUPFAM" id="SSF103642">
    <property type="entry name" value="Sec-C motif"/>
    <property type="match status" value="1"/>
</dbReference>
<protein>
    <recommendedName>
        <fullName evidence="1">UPF0225 protein YchJ</fullName>
    </recommendedName>
</protein>
<reference key="1">
    <citation type="journal article" date="2006" name="Mol. Microbiol.">
        <title>Role of pathogenicity island-associated integrases in the genome plasticity of uropathogenic Escherichia coli strain 536.</title>
        <authorList>
            <person name="Hochhut B."/>
            <person name="Wilde C."/>
            <person name="Balling G."/>
            <person name="Middendorf B."/>
            <person name="Dobrindt U."/>
            <person name="Brzuszkiewicz E."/>
            <person name="Gottschalk G."/>
            <person name="Carniel E."/>
            <person name="Hacker J."/>
        </authorList>
    </citation>
    <scope>NUCLEOTIDE SEQUENCE [LARGE SCALE GENOMIC DNA]</scope>
    <source>
        <strain>536 / UPEC</strain>
    </source>
</reference>
<comment type="similarity">
    <text evidence="1">Belongs to the UPF0225 family.</text>
</comment>
<proteinExistence type="inferred from homology"/>
<evidence type="ECO:0000255" key="1">
    <source>
        <dbReference type="HAMAP-Rule" id="MF_00612"/>
    </source>
</evidence>
<gene>
    <name evidence="1" type="primary">ychJ</name>
    <name type="ordered locus">ECP_1280</name>
</gene>
<feature type="chain" id="PRO_1000056724" description="UPF0225 protein YchJ">
    <location>
        <begin position="1"/>
        <end position="152"/>
    </location>
</feature>
<organism>
    <name type="scientific">Escherichia coli O6:K15:H31 (strain 536 / UPEC)</name>
    <dbReference type="NCBI Taxonomy" id="362663"/>
    <lineage>
        <taxon>Bacteria</taxon>
        <taxon>Pseudomonadati</taxon>
        <taxon>Pseudomonadota</taxon>
        <taxon>Gammaproteobacteria</taxon>
        <taxon>Enterobacterales</taxon>
        <taxon>Enterobacteriaceae</taxon>
        <taxon>Escherichia</taxon>
    </lineage>
</organism>
<name>YCHJ_ECOL5</name>